<name>Y684_MYCPN</name>
<proteinExistence type="evidence at protein level"/>
<dbReference type="EMBL" id="U00089">
    <property type="protein sequence ID" value="AAB95806.1"/>
    <property type="molecule type" value="Genomic_DNA"/>
</dbReference>
<dbReference type="EMBL" id="U34816">
    <property type="protein sequence ID" value="AAC43650.1"/>
    <property type="molecule type" value="Genomic_DNA"/>
</dbReference>
<dbReference type="PIR" id="S73484">
    <property type="entry name" value="S73484"/>
</dbReference>
<dbReference type="RefSeq" id="NP_110373.1">
    <property type="nucleotide sequence ID" value="NC_000912.1"/>
</dbReference>
<dbReference type="RefSeq" id="WP_010875041.1">
    <property type="nucleotide sequence ID" value="NC_000912.1"/>
</dbReference>
<dbReference type="IntAct" id="P75109">
    <property type="interactions" value="1"/>
</dbReference>
<dbReference type="STRING" id="272634.MPN_684"/>
<dbReference type="EnsemblBacteria" id="AAB95806">
    <property type="protein sequence ID" value="AAB95806"/>
    <property type="gene ID" value="MPN_684"/>
</dbReference>
<dbReference type="KEGG" id="mpn:MPN_684"/>
<dbReference type="PATRIC" id="fig|272634.6.peg.751"/>
<dbReference type="HOGENOM" id="CLU_237674_0_0_14"/>
<dbReference type="OrthoDB" id="403889at2"/>
<dbReference type="BioCyc" id="MPNE272634:G1GJ3-1093-MONOMER"/>
<dbReference type="Proteomes" id="UP000000808">
    <property type="component" value="Chromosome"/>
</dbReference>
<dbReference type="GO" id="GO:0005886">
    <property type="term" value="C:plasma membrane"/>
    <property type="evidence" value="ECO:0007669"/>
    <property type="project" value="UniProtKB-SubCell"/>
</dbReference>
<dbReference type="InterPro" id="IPR003838">
    <property type="entry name" value="ABC3_permease_C"/>
</dbReference>
<dbReference type="Pfam" id="PF02687">
    <property type="entry name" value="FtsX"/>
    <property type="match status" value="1"/>
</dbReference>
<gene>
    <name type="ordered locus">MPN_684</name>
    <name type="ORF">K05_orf1882</name>
    <name type="ORF">MP158</name>
</gene>
<reference key="1">
    <citation type="journal article" date="1996" name="Nucleic Acids Res.">
        <title>Complete sequence analysis of the genome of the bacterium Mycoplasma pneumoniae.</title>
        <authorList>
            <person name="Himmelreich R."/>
            <person name="Hilbert H."/>
            <person name="Plagens H."/>
            <person name="Pirkl E."/>
            <person name="Li B.-C."/>
            <person name="Herrmann R."/>
        </authorList>
    </citation>
    <scope>NUCLEOTIDE SEQUENCE [LARGE SCALE GENOMIC DNA]</scope>
    <source>
        <strain>ATCC 29342 / M129 / Subtype 1</strain>
    </source>
</reference>
<reference key="2">
    <citation type="journal article" date="1996" name="Nucleic Acids Res.">
        <title>Sequence analysis of 56 kb from the genome of the bacterium Mycoplasma pneumoniae comprising the dnaA region, the atp operon and a cluster of ribosomal protein genes.</title>
        <authorList>
            <person name="Hilbert H."/>
            <person name="Himmelreich R."/>
            <person name="Plagens H."/>
            <person name="Herrmann R."/>
        </authorList>
    </citation>
    <scope>NUCLEOTIDE SEQUENCE [GENOMIC DNA] OF 1-1848</scope>
    <source>
        <strain>ATCC 29342 / M129 / Subtype 1</strain>
    </source>
</reference>
<reference key="3">
    <citation type="journal article" date="2000" name="Electrophoresis">
        <title>Towards a two-dimensional proteome map of Mycoplasma pneumoniae.</title>
        <authorList>
            <person name="Regula J.T."/>
            <person name="Ueberle B."/>
            <person name="Boguth G."/>
            <person name="Goerg A."/>
            <person name="Schnoelzer M."/>
            <person name="Herrmann R."/>
            <person name="Frank R."/>
        </authorList>
    </citation>
    <scope>IDENTIFICATION BY MASS SPECTROMETRY</scope>
    <source>
        <strain>ATCC 29342 / M129 / Subtype 1</strain>
    </source>
</reference>
<protein>
    <recommendedName>
        <fullName>Uncharacterized ABC transporter permease MG468 homolog</fullName>
    </recommendedName>
</protein>
<feature type="chain" id="PRO_0000210632" description="Uncharacterized ABC transporter permease MG468 homolog">
    <location>
        <begin position="1"/>
        <end position="1882"/>
    </location>
</feature>
<feature type="transmembrane region" description="Helical" evidence="1">
    <location>
        <begin position="16"/>
        <end position="36"/>
    </location>
</feature>
<feature type="transmembrane region" description="Helical" evidence="1">
    <location>
        <begin position="987"/>
        <end position="1007"/>
    </location>
</feature>
<feature type="transmembrane region" description="Helical" evidence="1">
    <location>
        <begin position="1037"/>
        <end position="1057"/>
    </location>
</feature>
<feature type="transmembrane region" description="Helical" evidence="1">
    <location>
        <begin position="1080"/>
        <end position="1100"/>
    </location>
</feature>
<feature type="transmembrane region" description="Helical" evidence="1">
    <location>
        <begin position="1154"/>
        <end position="1174"/>
    </location>
</feature>
<feature type="transmembrane region" description="Helical" evidence="1">
    <location>
        <begin position="1759"/>
        <end position="1779"/>
    </location>
</feature>
<feature type="transmembrane region" description="Helical" evidence="1">
    <location>
        <begin position="1807"/>
        <end position="1827"/>
    </location>
</feature>
<feature type="transmembrane region" description="Helical" evidence="1">
    <location>
        <begin position="1828"/>
        <end position="1848"/>
    </location>
</feature>
<feature type="transmembrane region" description="Helical" evidence="1">
    <location>
        <begin position="1851"/>
        <end position="1871"/>
    </location>
</feature>
<feature type="region of interest" description="Disordered" evidence="2">
    <location>
        <begin position="103"/>
        <end position="129"/>
    </location>
</feature>
<feature type="region of interest" description="Disordered" evidence="2">
    <location>
        <begin position="220"/>
        <end position="306"/>
    </location>
</feature>
<feature type="region of interest" description="Disordered" evidence="2">
    <location>
        <begin position="492"/>
        <end position="513"/>
    </location>
</feature>
<feature type="region of interest" description="Disordered" evidence="2">
    <location>
        <begin position="658"/>
        <end position="698"/>
    </location>
</feature>
<feature type="region of interest" description="Disordered" evidence="2">
    <location>
        <begin position="1233"/>
        <end position="1253"/>
    </location>
</feature>
<feature type="region of interest" description="Disordered" evidence="2">
    <location>
        <begin position="1572"/>
        <end position="1598"/>
    </location>
</feature>
<feature type="compositionally biased region" description="Basic and acidic residues" evidence="2">
    <location>
        <begin position="221"/>
        <end position="239"/>
    </location>
</feature>
<feature type="compositionally biased region" description="Polar residues" evidence="2">
    <location>
        <begin position="240"/>
        <end position="249"/>
    </location>
</feature>
<feature type="compositionally biased region" description="Basic and acidic residues" evidence="2">
    <location>
        <begin position="259"/>
        <end position="275"/>
    </location>
</feature>
<feature type="compositionally biased region" description="Basic and acidic residues" evidence="2">
    <location>
        <begin position="284"/>
        <end position="294"/>
    </location>
</feature>
<feature type="compositionally biased region" description="Basic and acidic residues" evidence="2">
    <location>
        <begin position="500"/>
        <end position="511"/>
    </location>
</feature>
<feature type="compositionally biased region" description="Low complexity" evidence="2">
    <location>
        <begin position="667"/>
        <end position="698"/>
    </location>
</feature>
<feature type="compositionally biased region" description="Low complexity" evidence="2">
    <location>
        <begin position="1234"/>
        <end position="1245"/>
    </location>
</feature>
<feature type="compositionally biased region" description="Gly residues" evidence="2">
    <location>
        <begin position="1583"/>
        <end position="1594"/>
    </location>
</feature>
<organism>
    <name type="scientific">Mycoplasma pneumoniae (strain ATCC 29342 / M129 / Subtype 1)</name>
    <name type="common">Mycoplasmoides pneumoniae</name>
    <dbReference type="NCBI Taxonomy" id="272634"/>
    <lineage>
        <taxon>Bacteria</taxon>
        <taxon>Bacillati</taxon>
        <taxon>Mycoplasmatota</taxon>
        <taxon>Mycoplasmoidales</taxon>
        <taxon>Mycoplasmoidaceae</taxon>
        <taxon>Mycoplasmoides</taxon>
    </lineage>
</organism>
<keyword id="KW-1003">Cell membrane</keyword>
<keyword id="KW-0472">Membrane</keyword>
<keyword id="KW-1185">Reference proteome</keyword>
<keyword id="KW-0812">Transmembrane</keyword>
<keyword id="KW-1133">Transmembrane helix</keyword>
<keyword id="KW-0813">Transport</keyword>
<comment type="subcellular location">
    <subcellularLocation>
        <location evidence="3">Cell membrane</location>
        <topology evidence="3">Multi-pass membrane protein</topology>
    </subcellularLocation>
</comment>
<comment type="similarity">
    <text evidence="3">Belongs to the ABC-4 integral membrane protein family.</text>
</comment>
<evidence type="ECO:0000255" key="1"/>
<evidence type="ECO:0000256" key="2">
    <source>
        <dbReference type="SAM" id="MobiDB-lite"/>
    </source>
</evidence>
<evidence type="ECO:0000305" key="3"/>
<accession>P75109</accession>
<accession>Q50317</accession>
<sequence>MFSFFKQIFKSLKKFFFLLFGIIFVLFSIIFLETSILQLSNNLVNTYTALVQKTNSSDIVAPAIFKESSPVYKTELKEEKRHFSKIKLTEKKINFIWPYQESDFGSDSEKKDSTTKSSDNNPRKGDVNDKDKLFLARKRGILKAYGEANIAEKRIYKGLAVSFQNTYSFTGTDQESNNLNQNTVSDPQNLIYDKEGNLLGYFVDGLILDGIPLRAGIARFPGDKGKGEDKKTTKKKSEIKQASSATTVLQPLAAQAKMTDAKETTNNEEPKKDSNVEEQYTTNNKDKVWFKSDETQAGSSSGESETSKLSTSYLFTGGQEAANWFPNLYANVPIVLPISPGSQFWLETNPFKEIIEVFQKEKEEKEKQSFSLTFTLDTSKLSHLDKEEFDWLEKQAETISSGSSFGDYNLKKKINSLKSFELNINKDWLKNKVKAEKETILDSLPGFSNSDKNTIFSTQSGDAKSGTQSNPSSLIALRSSVSFKPQLQQTNVALAQQQQDKQESSADDGVKDPTFSDVQTEFDKIGTENHTPQKNLNNVYAALLHQWKSIFQEDLVKKVTALLEKYRDAFLKAKALKELEFSRQNLAIATNVSSEESASFLVSNKDSQKYNDLSIIEGINFKSWLAKEKSNPLDMVYGGKSNSEGFLEKVEYEFKPTQTDEKKKAAAKTTQGTTDSLTQLADASSSSSSSSTGDTKSTSTKFQIYPKLANILAQAQLPEASSIPDTLTNAIKQWSTLDKKGFEALDDTGKSKAANNYVALLSYFTPEFQDPNELVVTNRQKLDIPIIFKNGVNPLTLPTDQQSLVVQTPEAHGAVVSQQWLFKHDKEVLPLEGEYSWKEALENPKNLPNWLNDLPDKYKFSINGLTFAILGVGESVETGYPVLSTNSPLPNSQDEGLIFLNEQGYRSVLFAVPAASEENYYAFKSDDIKAKFPGQDPIQVVASKLKGYLNVPDSDLAFNVKDISKFQYLTTARNYFPDLVQNYLAIASVVIAAFLSILALYLTILLIKSFIKKNQTEFSIIRAGGFSTAKFIAGMSVFAGIVALASSFFGVLFAFLLERQVKGIISRYWFIALPANSFNWISFFGSMLLIFVIFQFISWIAFKQLFSKPVNVLIDQGNETKFSVFLHLLKRKSYTMTPLGKFRVSLIISRLSRLFTYVGLSSIALLLIGIAGTIPQKFGAAQSNTVLNRNFNYRLNLQTPTEQSGWYAIQPYSRFGQTDDSLGIKALYKDKGDQIQQQQQQQQQQGNDKEHPYNLKELKISDRGGNPIKHNGKEIELGNLLLPSFGGAQQLNTDENFFRHASLSKWLIDFPIRVGGANINPWEIVEKSIPKQITQLLSASSDQFLIAVLTDDYFNNLNNNGFLTRNPRTNFIQLDAARVLTQINVFNPGGVKFNEQFLKFLTKVYGDPELSYQDSKLTYGIVPVDPQIEETYTYVQGPFGFKETELNPDSPYTLTGISPDSKFVNLTDSGGNSLRSLISSDSEMNVIVNAGFQYANNTKIGDFIFIQPKNTATRYSEKFLKSPPKTPTVKFRVVGVSTDAFGQELYINQNIANRLLKLNGFDGRGVIKDVVKDGQSTDDSGGTSSGGGSCGGGSTSSTTKDKYKIEYVKPTGYVPFNGVFSKELNPSLVSKALVLNSNIGVWGNFTDFGNNFTNLVKGKENKIITSILPSDPDILKQLAKEKGENGVDSMTYENLRKKVIEKYTSEWSSTQSLASGARGIFGDNIMVPALKLDAAGASAQIIRNNAEVLFNTVNQVDGFLLGTIIPFIFITCVVLGISMLEEMKRIFISLKSIGYKDSQNLVSLLCFFIPAFVLSLLISIAILAGLLVGVQALVFGVAQVFLTNVFEFLPYMVGIVLFGATIFVIGSYFWIKLRSAELKEGF</sequence>